<feature type="chain" id="PRO_1000021087" description="4-hydroxy-3-methylbut-2-enyl diphosphate reductase">
    <location>
        <begin position="1"/>
        <end position="316"/>
    </location>
</feature>
<feature type="active site" description="Proton donor" evidence="1">
    <location>
        <position position="133"/>
    </location>
</feature>
<feature type="binding site" evidence="1">
    <location>
        <position position="12"/>
    </location>
    <ligand>
        <name>[4Fe-4S] cluster</name>
        <dbReference type="ChEBI" id="CHEBI:49883"/>
    </ligand>
</feature>
<feature type="binding site" evidence="1">
    <location>
        <position position="43"/>
    </location>
    <ligand>
        <name>(2E)-4-hydroxy-3-methylbut-2-enyl diphosphate</name>
        <dbReference type="ChEBI" id="CHEBI:128753"/>
    </ligand>
</feature>
<feature type="binding site" evidence="1">
    <location>
        <position position="43"/>
    </location>
    <ligand>
        <name>dimethylallyl diphosphate</name>
        <dbReference type="ChEBI" id="CHEBI:57623"/>
    </ligand>
</feature>
<feature type="binding site" evidence="1">
    <location>
        <position position="43"/>
    </location>
    <ligand>
        <name>isopentenyl diphosphate</name>
        <dbReference type="ChEBI" id="CHEBI:128769"/>
    </ligand>
</feature>
<feature type="binding site" evidence="1">
    <location>
        <position position="81"/>
    </location>
    <ligand>
        <name>(2E)-4-hydroxy-3-methylbut-2-enyl diphosphate</name>
        <dbReference type="ChEBI" id="CHEBI:128753"/>
    </ligand>
</feature>
<feature type="binding site" evidence="1">
    <location>
        <position position="81"/>
    </location>
    <ligand>
        <name>dimethylallyl diphosphate</name>
        <dbReference type="ChEBI" id="CHEBI:57623"/>
    </ligand>
</feature>
<feature type="binding site" evidence="1">
    <location>
        <position position="81"/>
    </location>
    <ligand>
        <name>isopentenyl diphosphate</name>
        <dbReference type="ChEBI" id="CHEBI:128769"/>
    </ligand>
</feature>
<feature type="binding site" evidence="1">
    <location>
        <position position="103"/>
    </location>
    <ligand>
        <name>[4Fe-4S] cluster</name>
        <dbReference type="ChEBI" id="CHEBI:49883"/>
    </ligand>
</feature>
<feature type="binding site" evidence="1">
    <location>
        <position position="131"/>
    </location>
    <ligand>
        <name>(2E)-4-hydroxy-3-methylbut-2-enyl diphosphate</name>
        <dbReference type="ChEBI" id="CHEBI:128753"/>
    </ligand>
</feature>
<feature type="binding site" evidence="1">
    <location>
        <position position="131"/>
    </location>
    <ligand>
        <name>dimethylallyl diphosphate</name>
        <dbReference type="ChEBI" id="CHEBI:57623"/>
    </ligand>
</feature>
<feature type="binding site" evidence="1">
    <location>
        <position position="131"/>
    </location>
    <ligand>
        <name>isopentenyl diphosphate</name>
        <dbReference type="ChEBI" id="CHEBI:128769"/>
    </ligand>
</feature>
<feature type="binding site" evidence="1">
    <location>
        <position position="170"/>
    </location>
    <ligand>
        <name>(2E)-4-hydroxy-3-methylbut-2-enyl diphosphate</name>
        <dbReference type="ChEBI" id="CHEBI:128753"/>
    </ligand>
</feature>
<feature type="binding site" evidence="1">
    <location>
        <position position="198"/>
    </location>
    <ligand>
        <name>[4Fe-4S] cluster</name>
        <dbReference type="ChEBI" id="CHEBI:49883"/>
    </ligand>
</feature>
<feature type="binding site" evidence="1">
    <location>
        <position position="226"/>
    </location>
    <ligand>
        <name>(2E)-4-hydroxy-3-methylbut-2-enyl diphosphate</name>
        <dbReference type="ChEBI" id="CHEBI:128753"/>
    </ligand>
</feature>
<feature type="binding site" evidence="1">
    <location>
        <position position="226"/>
    </location>
    <ligand>
        <name>dimethylallyl diphosphate</name>
        <dbReference type="ChEBI" id="CHEBI:57623"/>
    </ligand>
</feature>
<feature type="binding site" evidence="1">
    <location>
        <position position="226"/>
    </location>
    <ligand>
        <name>isopentenyl diphosphate</name>
        <dbReference type="ChEBI" id="CHEBI:128769"/>
    </ligand>
</feature>
<feature type="binding site" evidence="1">
    <location>
        <position position="228"/>
    </location>
    <ligand>
        <name>(2E)-4-hydroxy-3-methylbut-2-enyl diphosphate</name>
        <dbReference type="ChEBI" id="CHEBI:128753"/>
    </ligand>
</feature>
<feature type="binding site" evidence="1">
    <location>
        <position position="228"/>
    </location>
    <ligand>
        <name>dimethylallyl diphosphate</name>
        <dbReference type="ChEBI" id="CHEBI:57623"/>
    </ligand>
</feature>
<feature type="binding site" evidence="1">
    <location>
        <position position="228"/>
    </location>
    <ligand>
        <name>isopentenyl diphosphate</name>
        <dbReference type="ChEBI" id="CHEBI:128769"/>
    </ligand>
</feature>
<feature type="binding site" evidence="1">
    <location>
        <position position="271"/>
    </location>
    <ligand>
        <name>(2E)-4-hydroxy-3-methylbut-2-enyl diphosphate</name>
        <dbReference type="ChEBI" id="CHEBI:128753"/>
    </ligand>
</feature>
<feature type="binding site" evidence="1">
    <location>
        <position position="271"/>
    </location>
    <ligand>
        <name>dimethylallyl diphosphate</name>
        <dbReference type="ChEBI" id="CHEBI:57623"/>
    </ligand>
</feature>
<feature type="binding site" evidence="1">
    <location>
        <position position="271"/>
    </location>
    <ligand>
        <name>isopentenyl diphosphate</name>
        <dbReference type="ChEBI" id="CHEBI:128769"/>
    </ligand>
</feature>
<reference key="1">
    <citation type="journal article" date="2007" name="J. Bacteriol.">
        <title>The complete genome sequence of Bacillus thuringiensis Al Hakam.</title>
        <authorList>
            <person name="Challacombe J.F."/>
            <person name="Altherr M.R."/>
            <person name="Xie G."/>
            <person name="Bhotika S.S."/>
            <person name="Brown N."/>
            <person name="Bruce D."/>
            <person name="Campbell C.S."/>
            <person name="Campbell M.L."/>
            <person name="Chen J."/>
            <person name="Chertkov O."/>
            <person name="Cleland C."/>
            <person name="Dimitrijevic M."/>
            <person name="Doggett N.A."/>
            <person name="Fawcett J.J."/>
            <person name="Glavina T."/>
            <person name="Goodwin L.A."/>
            <person name="Green L.D."/>
            <person name="Han C.S."/>
            <person name="Hill K.K."/>
            <person name="Hitchcock P."/>
            <person name="Jackson P.J."/>
            <person name="Keim P."/>
            <person name="Kewalramani A.R."/>
            <person name="Longmire J."/>
            <person name="Lucas S."/>
            <person name="Malfatti S."/>
            <person name="Martinez D."/>
            <person name="McMurry K."/>
            <person name="Meincke L.J."/>
            <person name="Misra M."/>
            <person name="Moseman B.L."/>
            <person name="Mundt M."/>
            <person name="Munk A.C."/>
            <person name="Okinaka R.T."/>
            <person name="Parson-Quintana B."/>
            <person name="Reilly L.P."/>
            <person name="Richardson P."/>
            <person name="Robinson D.L."/>
            <person name="Saunders E."/>
            <person name="Tapia R."/>
            <person name="Tesmer J.G."/>
            <person name="Thayer N."/>
            <person name="Thompson L.S."/>
            <person name="Tice H."/>
            <person name="Ticknor L.O."/>
            <person name="Wills P.L."/>
            <person name="Gilna P."/>
            <person name="Brettin T.S."/>
        </authorList>
    </citation>
    <scope>NUCLEOTIDE SEQUENCE [LARGE SCALE GENOMIC DNA]</scope>
    <source>
        <strain>Al Hakam</strain>
    </source>
</reference>
<proteinExistence type="inferred from homology"/>
<comment type="function">
    <text evidence="1">Catalyzes the conversion of 1-hydroxy-2-methyl-2-(E)-butenyl 4-diphosphate (HMBPP) into a mixture of isopentenyl diphosphate (IPP) and dimethylallyl diphosphate (DMAPP). Acts in the terminal step of the DOXP/MEP pathway for isoprenoid precursor biosynthesis.</text>
</comment>
<comment type="catalytic activity">
    <reaction evidence="1">
        <text>isopentenyl diphosphate + 2 oxidized [2Fe-2S]-[ferredoxin] + H2O = (2E)-4-hydroxy-3-methylbut-2-enyl diphosphate + 2 reduced [2Fe-2S]-[ferredoxin] + 2 H(+)</text>
        <dbReference type="Rhea" id="RHEA:24488"/>
        <dbReference type="Rhea" id="RHEA-COMP:10000"/>
        <dbReference type="Rhea" id="RHEA-COMP:10001"/>
        <dbReference type="ChEBI" id="CHEBI:15377"/>
        <dbReference type="ChEBI" id="CHEBI:15378"/>
        <dbReference type="ChEBI" id="CHEBI:33737"/>
        <dbReference type="ChEBI" id="CHEBI:33738"/>
        <dbReference type="ChEBI" id="CHEBI:128753"/>
        <dbReference type="ChEBI" id="CHEBI:128769"/>
        <dbReference type="EC" id="1.17.7.4"/>
    </reaction>
</comment>
<comment type="catalytic activity">
    <reaction evidence="1">
        <text>dimethylallyl diphosphate + 2 oxidized [2Fe-2S]-[ferredoxin] + H2O = (2E)-4-hydroxy-3-methylbut-2-enyl diphosphate + 2 reduced [2Fe-2S]-[ferredoxin] + 2 H(+)</text>
        <dbReference type="Rhea" id="RHEA:24825"/>
        <dbReference type="Rhea" id="RHEA-COMP:10000"/>
        <dbReference type="Rhea" id="RHEA-COMP:10001"/>
        <dbReference type="ChEBI" id="CHEBI:15377"/>
        <dbReference type="ChEBI" id="CHEBI:15378"/>
        <dbReference type="ChEBI" id="CHEBI:33737"/>
        <dbReference type="ChEBI" id="CHEBI:33738"/>
        <dbReference type="ChEBI" id="CHEBI:57623"/>
        <dbReference type="ChEBI" id="CHEBI:128753"/>
        <dbReference type="EC" id="1.17.7.4"/>
    </reaction>
</comment>
<comment type="cofactor">
    <cofactor evidence="1">
        <name>[4Fe-4S] cluster</name>
        <dbReference type="ChEBI" id="CHEBI:49883"/>
    </cofactor>
    <text evidence="1">Binds 1 [4Fe-4S] cluster per subunit.</text>
</comment>
<comment type="pathway">
    <text evidence="1">Isoprenoid biosynthesis; dimethylallyl diphosphate biosynthesis; dimethylallyl diphosphate from (2E)-4-hydroxy-3-methylbutenyl diphosphate: step 1/1.</text>
</comment>
<comment type="pathway">
    <text evidence="1">Isoprenoid biosynthesis; isopentenyl diphosphate biosynthesis via DXP pathway; isopentenyl diphosphate from 1-deoxy-D-xylulose 5-phosphate: step 6/6.</text>
</comment>
<comment type="similarity">
    <text evidence="1">Belongs to the IspH family.</text>
</comment>
<dbReference type="EC" id="1.17.7.4" evidence="1"/>
<dbReference type="EMBL" id="CP000485">
    <property type="protein sequence ID" value="ABK87104.1"/>
    <property type="molecule type" value="Genomic_DNA"/>
</dbReference>
<dbReference type="RefSeq" id="WP_000706666.1">
    <property type="nucleotide sequence ID" value="NC_008600.1"/>
</dbReference>
<dbReference type="SMR" id="A0RIR1"/>
<dbReference type="KEGG" id="btl:BALH_3881"/>
<dbReference type="HOGENOM" id="CLU_027486_0_0_9"/>
<dbReference type="UniPathway" id="UPA00056">
    <property type="reaction ID" value="UER00097"/>
</dbReference>
<dbReference type="UniPathway" id="UPA00059">
    <property type="reaction ID" value="UER00105"/>
</dbReference>
<dbReference type="GO" id="GO:0051539">
    <property type="term" value="F:4 iron, 4 sulfur cluster binding"/>
    <property type="evidence" value="ECO:0007669"/>
    <property type="project" value="UniProtKB-UniRule"/>
</dbReference>
<dbReference type="GO" id="GO:0051745">
    <property type="term" value="F:4-hydroxy-3-methylbut-2-enyl diphosphate reductase activity"/>
    <property type="evidence" value="ECO:0007669"/>
    <property type="project" value="UniProtKB-UniRule"/>
</dbReference>
<dbReference type="GO" id="GO:0046872">
    <property type="term" value="F:metal ion binding"/>
    <property type="evidence" value="ECO:0007669"/>
    <property type="project" value="UniProtKB-KW"/>
</dbReference>
<dbReference type="GO" id="GO:0050992">
    <property type="term" value="P:dimethylallyl diphosphate biosynthetic process"/>
    <property type="evidence" value="ECO:0007669"/>
    <property type="project" value="UniProtKB-UniRule"/>
</dbReference>
<dbReference type="GO" id="GO:0019288">
    <property type="term" value="P:isopentenyl diphosphate biosynthetic process, methylerythritol 4-phosphate pathway"/>
    <property type="evidence" value="ECO:0007669"/>
    <property type="project" value="UniProtKB-UniRule"/>
</dbReference>
<dbReference type="GO" id="GO:0016114">
    <property type="term" value="P:terpenoid biosynthetic process"/>
    <property type="evidence" value="ECO:0007669"/>
    <property type="project" value="UniProtKB-UniRule"/>
</dbReference>
<dbReference type="CDD" id="cd13944">
    <property type="entry name" value="lytB_ispH"/>
    <property type="match status" value="1"/>
</dbReference>
<dbReference type="Gene3D" id="3.40.50.11270">
    <property type="match status" value="1"/>
</dbReference>
<dbReference type="Gene3D" id="3.40.1010.20">
    <property type="entry name" value="4-hydroxy-3-methylbut-2-enyl diphosphate reductase, catalytic domain"/>
    <property type="match status" value="2"/>
</dbReference>
<dbReference type="HAMAP" id="MF_00191">
    <property type="entry name" value="IspH"/>
    <property type="match status" value="1"/>
</dbReference>
<dbReference type="InterPro" id="IPR003451">
    <property type="entry name" value="LytB/IspH"/>
</dbReference>
<dbReference type="NCBIfam" id="TIGR00216">
    <property type="entry name" value="ispH_lytB"/>
    <property type="match status" value="1"/>
</dbReference>
<dbReference type="NCBIfam" id="NF002187">
    <property type="entry name" value="PRK01045.1-1"/>
    <property type="match status" value="1"/>
</dbReference>
<dbReference type="PANTHER" id="PTHR30426">
    <property type="entry name" value="4-HYDROXY-3-METHYLBUT-2-ENYL DIPHOSPHATE REDUCTASE"/>
    <property type="match status" value="1"/>
</dbReference>
<dbReference type="PANTHER" id="PTHR30426:SF0">
    <property type="entry name" value="4-HYDROXY-3-METHYLBUT-2-ENYL DIPHOSPHATE REDUCTASE"/>
    <property type="match status" value="1"/>
</dbReference>
<dbReference type="Pfam" id="PF02401">
    <property type="entry name" value="LYTB"/>
    <property type="match status" value="1"/>
</dbReference>
<keyword id="KW-0004">4Fe-4S</keyword>
<keyword id="KW-0408">Iron</keyword>
<keyword id="KW-0411">Iron-sulfur</keyword>
<keyword id="KW-0414">Isoprene biosynthesis</keyword>
<keyword id="KW-0479">Metal-binding</keyword>
<keyword id="KW-0560">Oxidoreductase</keyword>
<organism>
    <name type="scientific">Bacillus thuringiensis (strain Al Hakam)</name>
    <dbReference type="NCBI Taxonomy" id="412694"/>
    <lineage>
        <taxon>Bacteria</taxon>
        <taxon>Bacillati</taxon>
        <taxon>Bacillota</taxon>
        <taxon>Bacilli</taxon>
        <taxon>Bacillales</taxon>
        <taxon>Bacillaceae</taxon>
        <taxon>Bacillus</taxon>
        <taxon>Bacillus cereus group</taxon>
    </lineage>
</organism>
<evidence type="ECO:0000255" key="1">
    <source>
        <dbReference type="HAMAP-Rule" id="MF_00191"/>
    </source>
</evidence>
<gene>
    <name evidence="1" type="primary">ispH</name>
    <name type="ordered locus">BALH_3881</name>
</gene>
<accession>A0RIR1</accession>
<protein>
    <recommendedName>
        <fullName evidence="1">4-hydroxy-3-methylbut-2-enyl diphosphate reductase</fullName>
        <shortName evidence="1">HMBPP reductase</shortName>
        <ecNumber evidence="1">1.17.7.4</ecNumber>
    </recommendedName>
</protein>
<sequence>MKIVKISPRGYCYGVVDAMVIARNAALDTSLPRPIYILGMIVHNKHVTDAFEEDGIITLDGPSRLDILDKIDSGTVIFTAHGVSPEVKQRAKEKGLTTIDATCPDVTKTHDLIEAKKAEGYHVIYIGKKNHPEPEGAVGIAPDIVHLIEKADDLKTLEIPTNKILVTNQTTMSQWDVQHLMEDIQKKFPTAEFHKEICLATQVRQEAVAKQADVADLTIVVGDPKSNNSNRLAQVSQEIAGTKAYRVADVSEIKLEWLQGVENVAVTAGASTPTPITKEVIAFLEQYDPMNPATWERVRKVPLQKILPRVKVKKEQ</sequence>
<name>ISPH_BACAH</name>